<dbReference type="EMBL" id="CP000082">
    <property type="protein sequence ID" value="AAZ19764.1"/>
    <property type="status" value="ALT_INIT"/>
    <property type="molecule type" value="Genomic_DNA"/>
</dbReference>
<dbReference type="RefSeq" id="WP_011281173.1">
    <property type="nucleotide sequence ID" value="NC_007204.1"/>
</dbReference>
<dbReference type="SMR" id="Q4FQE4"/>
<dbReference type="STRING" id="259536.Psyc_1916"/>
<dbReference type="KEGG" id="par:Psyc_1916"/>
<dbReference type="eggNOG" id="COG0254">
    <property type="taxonomic scope" value="Bacteria"/>
</dbReference>
<dbReference type="HOGENOM" id="CLU_114306_2_1_6"/>
<dbReference type="OrthoDB" id="9803251at2"/>
<dbReference type="Proteomes" id="UP000000546">
    <property type="component" value="Chromosome"/>
</dbReference>
<dbReference type="GO" id="GO:1990904">
    <property type="term" value="C:ribonucleoprotein complex"/>
    <property type="evidence" value="ECO:0007669"/>
    <property type="project" value="UniProtKB-KW"/>
</dbReference>
<dbReference type="GO" id="GO:0005840">
    <property type="term" value="C:ribosome"/>
    <property type="evidence" value="ECO:0007669"/>
    <property type="project" value="UniProtKB-KW"/>
</dbReference>
<dbReference type="GO" id="GO:0003735">
    <property type="term" value="F:structural constituent of ribosome"/>
    <property type="evidence" value="ECO:0007669"/>
    <property type="project" value="InterPro"/>
</dbReference>
<dbReference type="GO" id="GO:0006412">
    <property type="term" value="P:translation"/>
    <property type="evidence" value="ECO:0007669"/>
    <property type="project" value="UniProtKB-UniRule"/>
</dbReference>
<dbReference type="Gene3D" id="4.10.830.30">
    <property type="entry name" value="Ribosomal protein L31"/>
    <property type="match status" value="1"/>
</dbReference>
<dbReference type="HAMAP" id="MF_00502">
    <property type="entry name" value="Ribosomal_bL31_2"/>
    <property type="match status" value="1"/>
</dbReference>
<dbReference type="InterPro" id="IPR034704">
    <property type="entry name" value="Ribosomal_bL28/bL31-like_sf"/>
</dbReference>
<dbReference type="InterPro" id="IPR002150">
    <property type="entry name" value="Ribosomal_bL31"/>
</dbReference>
<dbReference type="InterPro" id="IPR027493">
    <property type="entry name" value="Ribosomal_bL31_B"/>
</dbReference>
<dbReference type="InterPro" id="IPR042105">
    <property type="entry name" value="Ribosomal_bL31_sf"/>
</dbReference>
<dbReference type="NCBIfam" id="TIGR00105">
    <property type="entry name" value="L31"/>
    <property type="match status" value="1"/>
</dbReference>
<dbReference type="NCBIfam" id="NF002462">
    <property type="entry name" value="PRK01678.1"/>
    <property type="match status" value="1"/>
</dbReference>
<dbReference type="PANTHER" id="PTHR33280">
    <property type="entry name" value="50S RIBOSOMAL PROTEIN L31, CHLOROPLASTIC"/>
    <property type="match status" value="1"/>
</dbReference>
<dbReference type="PANTHER" id="PTHR33280:SF1">
    <property type="entry name" value="LARGE RIBOSOMAL SUBUNIT PROTEIN BL31C"/>
    <property type="match status" value="1"/>
</dbReference>
<dbReference type="Pfam" id="PF01197">
    <property type="entry name" value="Ribosomal_L31"/>
    <property type="match status" value="1"/>
</dbReference>
<dbReference type="PRINTS" id="PR01249">
    <property type="entry name" value="RIBOSOMALL31"/>
</dbReference>
<dbReference type="SUPFAM" id="SSF143800">
    <property type="entry name" value="L28p-like"/>
    <property type="match status" value="1"/>
</dbReference>
<dbReference type="PROSITE" id="PS01143">
    <property type="entry name" value="RIBOSOMAL_L31"/>
    <property type="match status" value="1"/>
</dbReference>
<evidence type="ECO:0000255" key="1">
    <source>
        <dbReference type="HAMAP-Rule" id="MF_00502"/>
    </source>
</evidence>
<evidence type="ECO:0000305" key="2"/>
<reference key="1">
    <citation type="journal article" date="2010" name="Appl. Environ. Microbiol.">
        <title>The genome sequence of Psychrobacter arcticus 273-4, a psychroactive Siberian permafrost bacterium, reveals mechanisms for adaptation to low-temperature growth.</title>
        <authorList>
            <person name="Ayala-del-Rio H.L."/>
            <person name="Chain P.S."/>
            <person name="Grzymski J.J."/>
            <person name="Ponder M.A."/>
            <person name="Ivanova N."/>
            <person name="Bergholz P.W."/>
            <person name="Di Bartolo G."/>
            <person name="Hauser L."/>
            <person name="Land M."/>
            <person name="Bakermans C."/>
            <person name="Rodrigues D."/>
            <person name="Klappenbach J."/>
            <person name="Zarka D."/>
            <person name="Larimer F."/>
            <person name="Richardson P."/>
            <person name="Murray A."/>
            <person name="Thomashow M."/>
            <person name="Tiedje J.M."/>
        </authorList>
    </citation>
    <scope>NUCLEOTIDE SEQUENCE [LARGE SCALE GENOMIC DNA]</scope>
    <source>
        <strain>DSM 17307 / VKM B-2377 / 273-4</strain>
    </source>
</reference>
<accession>Q4FQE4</accession>
<organism>
    <name type="scientific">Psychrobacter arcticus (strain DSM 17307 / VKM B-2377 / 273-4)</name>
    <dbReference type="NCBI Taxonomy" id="259536"/>
    <lineage>
        <taxon>Bacteria</taxon>
        <taxon>Pseudomonadati</taxon>
        <taxon>Pseudomonadota</taxon>
        <taxon>Gammaproteobacteria</taxon>
        <taxon>Moraxellales</taxon>
        <taxon>Moraxellaceae</taxon>
        <taxon>Psychrobacter</taxon>
    </lineage>
</organism>
<feature type="chain" id="PRO_0000259114" description="Large ribosomal subunit protein bL31B">
    <location>
        <begin position="1"/>
        <end position="93"/>
    </location>
</feature>
<proteinExistence type="inferred from homology"/>
<keyword id="KW-1185">Reference proteome</keyword>
<keyword id="KW-0687">Ribonucleoprotein</keyword>
<keyword id="KW-0689">Ribosomal protein</keyword>
<gene>
    <name evidence="1" type="primary">rpmE2</name>
    <name type="ordered locus">Psyc_1916</name>
</gene>
<name>RL31B_PSYA2</name>
<comment type="subunit">
    <text evidence="1">Part of the 50S ribosomal subunit.</text>
</comment>
<comment type="similarity">
    <text evidence="1">Belongs to the bacterial ribosomal protein bL31 family. Type B subfamily.</text>
</comment>
<comment type="sequence caution" evidence="2">
    <conflict type="erroneous initiation">
        <sequence resource="EMBL-CDS" id="AAZ19764"/>
    </conflict>
</comment>
<protein>
    <recommendedName>
        <fullName evidence="1">Large ribosomal subunit protein bL31B</fullName>
    </recommendedName>
    <alternativeName>
        <fullName evidence="2">50S ribosomal protein L31 type B</fullName>
    </alternativeName>
</protein>
<sequence>MRKDIHPNYQEVLFHDTNADVFFLTRSTVKTKTTREYEGSEYPYYPLDISSASHPFYTGEQRKTSTEGRVASFNKRFGAFGGRKKAADTDAAE</sequence>